<name>Y165_RICAH</name>
<comment type="similarity">
    <text evidence="1">Belongs to the UPF0301 (AlgH) family.</text>
</comment>
<sequence length="189" mass="21440">MGDKIFHNLSSKTLVATPHVITKGIYHKSLIYMLSHTEEGAIGLIFNRLVNHIDLKSFFKIKNDDITTPVMVPIYLGGPVEHEKGFFLHSSDYNKNLLLDFQNDLAVSSNLEISEDIAFGKGPKNSLFIVGYTAWKPGQLEEELERNLWLVMDCNKEFIFADNPEDKWHSALKHLGIDEIYFSAQIGNA</sequence>
<evidence type="ECO:0000255" key="1">
    <source>
        <dbReference type="HAMAP-Rule" id="MF_00758"/>
    </source>
</evidence>
<dbReference type="EMBL" id="CP000847">
    <property type="protein sequence ID" value="ABV74368.1"/>
    <property type="molecule type" value="Genomic_DNA"/>
</dbReference>
<dbReference type="RefSeq" id="WP_012013238.1">
    <property type="nucleotide sequence ID" value="NC_009881.1"/>
</dbReference>
<dbReference type="SMR" id="A8GLU3"/>
<dbReference type="STRING" id="293614.A1C_00165"/>
<dbReference type="KEGG" id="rak:A1C_00165"/>
<dbReference type="eggNOG" id="COG1678">
    <property type="taxonomic scope" value="Bacteria"/>
</dbReference>
<dbReference type="HOGENOM" id="CLU_057596_1_0_5"/>
<dbReference type="Proteomes" id="UP000006830">
    <property type="component" value="Chromosome"/>
</dbReference>
<dbReference type="GO" id="GO:0005829">
    <property type="term" value="C:cytosol"/>
    <property type="evidence" value="ECO:0007669"/>
    <property type="project" value="TreeGrafter"/>
</dbReference>
<dbReference type="Gene3D" id="3.40.1740.10">
    <property type="entry name" value="VC0467-like"/>
    <property type="match status" value="1"/>
</dbReference>
<dbReference type="HAMAP" id="MF_00758">
    <property type="entry name" value="UPF0301"/>
    <property type="match status" value="1"/>
</dbReference>
<dbReference type="InterPro" id="IPR003774">
    <property type="entry name" value="AlgH-like"/>
</dbReference>
<dbReference type="NCBIfam" id="NF001268">
    <property type="entry name" value="PRK00228.1-4"/>
    <property type="match status" value="1"/>
</dbReference>
<dbReference type="PANTHER" id="PTHR30327">
    <property type="entry name" value="UNCHARACTERIZED PROTEIN YQGE"/>
    <property type="match status" value="1"/>
</dbReference>
<dbReference type="PANTHER" id="PTHR30327:SF1">
    <property type="entry name" value="UPF0301 PROTEIN YQGE"/>
    <property type="match status" value="1"/>
</dbReference>
<dbReference type="Pfam" id="PF02622">
    <property type="entry name" value="DUF179"/>
    <property type="match status" value="1"/>
</dbReference>
<dbReference type="SUPFAM" id="SSF143456">
    <property type="entry name" value="VC0467-like"/>
    <property type="match status" value="1"/>
</dbReference>
<reference key="1">
    <citation type="submission" date="2007-09" db="EMBL/GenBank/DDBJ databases">
        <title>Complete genome sequence of Rickettsia akari.</title>
        <authorList>
            <person name="Madan A."/>
            <person name="Fahey J."/>
            <person name="Helton E."/>
            <person name="Ketteman M."/>
            <person name="Madan A."/>
            <person name="Rodrigues S."/>
            <person name="Sanchez A."/>
            <person name="Whiting M."/>
            <person name="Dasch G."/>
            <person name="Eremeeva M."/>
        </authorList>
    </citation>
    <scope>NUCLEOTIDE SEQUENCE [LARGE SCALE GENOMIC DNA]</scope>
    <source>
        <strain>Hartford</strain>
    </source>
</reference>
<feature type="chain" id="PRO_1000046675" description="UPF0301 protein A1C_00165">
    <location>
        <begin position="1"/>
        <end position="189"/>
    </location>
</feature>
<gene>
    <name type="ordered locus">A1C_00165</name>
</gene>
<protein>
    <recommendedName>
        <fullName evidence="1">UPF0301 protein A1C_00165</fullName>
    </recommendedName>
</protein>
<proteinExistence type="inferred from homology"/>
<organism>
    <name type="scientific">Rickettsia akari (strain Hartford)</name>
    <dbReference type="NCBI Taxonomy" id="293614"/>
    <lineage>
        <taxon>Bacteria</taxon>
        <taxon>Pseudomonadati</taxon>
        <taxon>Pseudomonadota</taxon>
        <taxon>Alphaproteobacteria</taxon>
        <taxon>Rickettsiales</taxon>
        <taxon>Rickettsiaceae</taxon>
        <taxon>Rickettsieae</taxon>
        <taxon>Rickettsia</taxon>
        <taxon>spotted fever group</taxon>
    </lineage>
</organism>
<accession>A8GLU3</accession>